<comment type="miscellaneous">
    <text evidence="1">Completely overlaps SSA1.</text>
</comment>
<comment type="caution">
    <text evidence="2">Product of a dubious gene prediction unlikely to encode a functional protein. Because of that it is not part of the S.cerevisiae S288c complete/reference proteome set.</text>
</comment>
<accession>P39703</accession>
<evidence type="ECO:0000305" key="1"/>
<evidence type="ECO:0000305" key="2">
    <source>
    </source>
</evidence>
<protein>
    <recommendedName>
        <fullName>Putative uncharacterized protein YAL004W</fullName>
    </recommendedName>
</protein>
<sequence length="215" mass="23740">MGVTSGGLNFKDTVFNGQQRDIESTTTQVENQDVFFLTLLVQTVSNGSGGRFVNNTQDIQTSNGTSILGSLSLRIVEVSWDSDDSVIDLGSQVRFGSFLHLTQDHGGDLFWGKVLGFTLKFNLNLRLTVNIDQLEWEVLHVSLHFWVVEVSTDQTLSVENGIRRIHSSLILSSITNQSFSVSESDKRWSGSVTLIVGNNVHTIISKVSNTRVCCT</sequence>
<proteinExistence type="uncertain"/>
<reference key="1">
    <citation type="journal article" date="1989" name="Nucleic Acids Res.">
        <title>The SSA1 and SSA2 genes of the yeast Saccharomyces cerevisiae.</title>
        <authorList>
            <person name="Slater M.R."/>
            <person name="Craig E.A."/>
        </authorList>
    </citation>
    <scope>NUCLEOTIDE SEQUENCE [GENOMIC DNA]</scope>
    <source>
        <strain>ATCC 204508 / S288c</strain>
    </source>
</reference>
<reference key="2">
    <citation type="submission" date="1993-06" db="EMBL/GenBank/DDBJ databases">
        <authorList>
            <person name="Slater M.R."/>
        </authorList>
    </citation>
    <scope>SEQUENCE REVISION TO 17</scope>
</reference>
<reference key="3">
    <citation type="journal article" date="1994" name="Yeast">
        <title>Sequencing of chromosome I of Saccharomyces cerevisiae: analysis of the 42 kbp SPO7-CENI-CDC15 region.</title>
        <authorList>
            <person name="Clark M.W."/>
            <person name="Keng T."/>
            <person name="Storms R.K."/>
            <person name="Zhong W.-W."/>
            <person name="Fortin N."/>
            <person name="Zeng B."/>
            <person name="Delaney S."/>
            <person name="Ouellette B.F.F."/>
            <person name="Barton A.B."/>
            <person name="Kaback D.B."/>
            <person name="Bussey H."/>
        </authorList>
    </citation>
    <scope>NUCLEOTIDE SEQUENCE [GENOMIC DNA]</scope>
    <source>
        <strain>ATCC 204511 / S288c / AB972</strain>
    </source>
</reference>
<reference key="4">
    <citation type="journal article" date="1995" name="Proc. Natl. Acad. Sci. U.S.A.">
        <title>The nucleotide sequence of chromosome I from Saccharomyces cerevisiae.</title>
        <authorList>
            <person name="Bussey H."/>
            <person name="Kaback D.B."/>
            <person name="Zhong W.-W."/>
            <person name="Vo D.H."/>
            <person name="Clark M.W."/>
            <person name="Fortin N."/>
            <person name="Hall J."/>
            <person name="Ouellette B.F.F."/>
            <person name="Keng T."/>
            <person name="Barton A.B."/>
            <person name="Su Y."/>
            <person name="Davies C.J."/>
            <person name="Storms R.K."/>
        </authorList>
    </citation>
    <scope>NUCLEOTIDE SEQUENCE [LARGE SCALE GENOMIC DNA]</scope>
    <source>
        <strain>ATCC 204508 / S288c</strain>
    </source>
</reference>
<reference key="5">
    <citation type="journal article" date="2014" name="G3 (Bethesda)">
        <title>The reference genome sequence of Saccharomyces cerevisiae: Then and now.</title>
        <authorList>
            <person name="Engel S.R."/>
            <person name="Dietrich F.S."/>
            <person name="Fisk D.G."/>
            <person name="Binkley G."/>
            <person name="Balakrishnan R."/>
            <person name="Costanzo M.C."/>
            <person name="Dwight S.S."/>
            <person name="Hitz B.C."/>
            <person name="Karra K."/>
            <person name="Nash R.S."/>
            <person name="Weng S."/>
            <person name="Wong E.D."/>
            <person name="Lloyd P."/>
            <person name="Skrzypek M.S."/>
            <person name="Miyasato S.R."/>
            <person name="Simison M."/>
            <person name="Cherry J.M."/>
        </authorList>
    </citation>
    <scope>GENOME REANNOTATION</scope>
    <source>
        <strain>ATCC 204508 / S288c</strain>
    </source>
</reference>
<feature type="chain" id="PRO_0000202411" description="Putative uncharacterized protein YAL004W">
    <location>
        <begin position="1"/>
        <end position="215"/>
    </location>
</feature>
<feature type="sequence conflict" description="In Ref. 4; AAC04953." evidence="1" ref="4">
    <original>G</original>
    <variation>E</variation>
    <location>
        <position position="17"/>
    </location>
</feature>
<gene>
    <name type="ordered locus">YAL004W</name>
</gene>
<name>YAA4_YEAST</name>
<dbReference type="EMBL" id="X12926">
    <property type="status" value="NOT_ANNOTATED_CDS"/>
    <property type="molecule type" value="Genomic_DNA"/>
</dbReference>
<dbReference type="EMBL" id="L22015">
    <property type="protein sequence ID" value="AAC04953.1"/>
    <property type="molecule type" value="Genomic_DNA"/>
</dbReference>
<dbReference type="PIR" id="S43450">
    <property type="entry name" value="S43450"/>
</dbReference>
<dbReference type="DIP" id="DIP-2750N"/>
<dbReference type="IntAct" id="P39703">
    <property type="interactions" value="2"/>
</dbReference>
<dbReference type="MINT" id="P39703"/>
<dbReference type="STRING" id="4932.YAL004W"/>
<dbReference type="PaxDb" id="4932-YAL004W"/>
<dbReference type="EnsemblFungi" id="YAL004W_mRNA">
    <property type="protein sequence ID" value="YAL004W"/>
    <property type="gene ID" value="YAL004W"/>
</dbReference>
<dbReference type="AGR" id="SGD:S000002136"/>
<dbReference type="SGD" id="S000002136">
    <property type="gene designation" value="YAL004W"/>
</dbReference>
<dbReference type="eggNOG" id="ENOG502QV65">
    <property type="taxonomic scope" value="Eukaryota"/>
</dbReference>
<dbReference type="HOGENOM" id="CLU_111699_0_0_1"/>
<dbReference type="InterPro" id="IPR019651">
    <property type="entry name" value="Glutamate_DH_NAD-spec"/>
</dbReference>
<dbReference type="Pfam" id="PF10712">
    <property type="entry name" value="NAD-GH"/>
    <property type="match status" value="1"/>
</dbReference>
<organism>
    <name type="scientific">Saccharomyces cerevisiae (strain ATCC 204508 / S288c)</name>
    <name type="common">Baker's yeast</name>
    <dbReference type="NCBI Taxonomy" id="559292"/>
    <lineage>
        <taxon>Eukaryota</taxon>
        <taxon>Fungi</taxon>
        <taxon>Dikarya</taxon>
        <taxon>Ascomycota</taxon>
        <taxon>Saccharomycotina</taxon>
        <taxon>Saccharomycetes</taxon>
        <taxon>Saccharomycetales</taxon>
        <taxon>Saccharomycetaceae</taxon>
        <taxon>Saccharomyces</taxon>
    </lineage>
</organism>